<sequence>MSHPKLESSSNKEIITEEVGLLKQLLDEATQKLIGSESFDKIEKIVSLSLTDDYTGLKETISALSNEEMVIVSRYFSILPLLINISEDVDLAYEINYKNNLNQDYLGKLSTTIDVVAGHENAKDILEHVNVVPVLTAHPTQVQRKTVLELTSKIHDLLRKYRDVKAGIVNQEKWYADLRRYIGIIMQTDTIREKKLKVKNEITNVMEYYNRSLIKAVTKLTAEYKALAAKKGIHLENPKPLTMGMWIGGDRDGNPFVTAETLRLSAMVQSEVIINHYIEQLNELYRNMSLSINLTEVSPELVTLANQSQDNSVYRENEPYRKAFNFIQDKLVQTLLNLKVGSSPKEKFVSRQESSDIVGRYIKSHIAQVASDIQTEELPAYATAEEFKQDLLLVKQSLVQYGQDSLVDGELACLIQAVDIFGFYLATIDMRQDSSINEACVAELLKSANIVDDYSSLSEEEKCQLLLKELTEDPRTLSSTHAPKSELLQKELAIFQTARELKDQLGEDIINQHIISHTESVSDMFELAIMLKEVGLIDANQARIQIVPLFETIEDLDNSRDIMTQYLHYELVKKWIATNNNYQEIMLGYSDSNKDGGYLSSGWTLYKAQNELTKIGEENGIKITFFHGRGGTVGRGGGPSYEAITSQPFGSIKDRIRLTEQGEIIENKYGNQDAAYYNLEMLISASIDRMVTRMITNPNEIDNFRETMDGIVSESNAVYRNLVFDNPYFYDYFFEASPIKEVSSLNIGSRPAARKTITEISGLRAIPWVFSWSQNRIMFPGWYGVGSAFKHFIEQDEANLAKLQTMYQKWPFFNSLLSNVDMVLSKSNMNIALQYAQLAGSKEVRDVFNIILNEWQLTKDMILAIEQHDNLLEENPMLHASLDYRLPYFNVLNYVQIELIKRLRSNQLDEDYEKLIHITINGIATGLRNSG</sequence>
<organism>
    <name type="scientific">Streptococcus agalactiae serotype III (strain NEM316)</name>
    <dbReference type="NCBI Taxonomy" id="211110"/>
    <lineage>
        <taxon>Bacteria</taxon>
        <taxon>Bacillati</taxon>
        <taxon>Bacillota</taxon>
        <taxon>Bacilli</taxon>
        <taxon>Lactobacillales</taxon>
        <taxon>Streptococcaceae</taxon>
        <taxon>Streptococcus</taxon>
    </lineage>
</organism>
<gene>
    <name evidence="1" type="primary">ppc</name>
    <name type="ordered locus">gbs0780</name>
</gene>
<protein>
    <recommendedName>
        <fullName evidence="1">Phosphoenolpyruvate carboxylase</fullName>
        <shortName evidence="1">PEPC</shortName>
        <shortName evidence="1">PEPCase</shortName>
        <ecNumber evidence="1">4.1.1.31</ecNumber>
    </recommendedName>
</protein>
<comment type="function">
    <text evidence="1">Forms oxaloacetate, a four-carbon dicarboxylic acid source for the tricarboxylic acid cycle.</text>
</comment>
<comment type="catalytic activity">
    <reaction evidence="1">
        <text>oxaloacetate + phosphate = phosphoenolpyruvate + hydrogencarbonate</text>
        <dbReference type="Rhea" id="RHEA:28370"/>
        <dbReference type="ChEBI" id="CHEBI:16452"/>
        <dbReference type="ChEBI" id="CHEBI:17544"/>
        <dbReference type="ChEBI" id="CHEBI:43474"/>
        <dbReference type="ChEBI" id="CHEBI:58702"/>
        <dbReference type="EC" id="4.1.1.31"/>
    </reaction>
</comment>
<comment type="cofactor">
    <cofactor evidence="1">
        <name>Mg(2+)</name>
        <dbReference type="ChEBI" id="CHEBI:18420"/>
    </cofactor>
</comment>
<comment type="similarity">
    <text evidence="1">Belongs to the PEPCase type 1 family.</text>
</comment>
<evidence type="ECO:0000255" key="1">
    <source>
        <dbReference type="HAMAP-Rule" id="MF_00595"/>
    </source>
</evidence>
<keyword id="KW-0120">Carbon dioxide fixation</keyword>
<keyword id="KW-0456">Lyase</keyword>
<keyword id="KW-0460">Magnesium</keyword>
<accession>Q8E647</accession>
<dbReference type="EC" id="4.1.1.31" evidence="1"/>
<dbReference type="EMBL" id="AL766847">
    <property type="protein sequence ID" value="CAD46424.1"/>
    <property type="molecule type" value="Genomic_DNA"/>
</dbReference>
<dbReference type="RefSeq" id="WP_000019267.1">
    <property type="nucleotide sequence ID" value="NC_004368.1"/>
</dbReference>
<dbReference type="SMR" id="Q8E647"/>
<dbReference type="KEGG" id="san:gbs0780"/>
<dbReference type="eggNOG" id="COG2352">
    <property type="taxonomic scope" value="Bacteria"/>
</dbReference>
<dbReference type="HOGENOM" id="CLU_006557_2_0_9"/>
<dbReference type="Proteomes" id="UP000000823">
    <property type="component" value="Chromosome"/>
</dbReference>
<dbReference type="GO" id="GO:0005829">
    <property type="term" value="C:cytosol"/>
    <property type="evidence" value="ECO:0007669"/>
    <property type="project" value="TreeGrafter"/>
</dbReference>
<dbReference type="GO" id="GO:0000287">
    <property type="term" value="F:magnesium ion binding"/>
    <property type="evidence" value="ECO:0007669"/>
    <property type="project" value="UniProtKB-UniRule"/>
</dbReference>
<dbReference type="GO" id="GO:0008964">
    <property type="term" value="F:phosphoenolpyruvate carboxylase activity"/>
    <property type="evidence" value="ECO:0007669"/>
    <property type="project" value="UniProtKB-UniRule"/>
</dbReference>
<dbReference type="GO" id="GO:0015977">
    <property type="term" value="P:carbon fixation"/>
    <property type="evidence" value="ECO:0007669"/>
    <property type="project" value="UniProtKB-UniRule"/>
</dbReference>
<dbReference type="GO" id="GO:0006107">
    <property type="term" value="P:oxaloacetate metabolic process"/>
    <property type="evidence" value="ECO:0007669"/>
    <property type="project" value="UniProtKB-UniRule"/>
</dbReference>
<dbReference type="GO" id="GO:0006099">
    <property type="term" value="P:tricarboxylic acid cycle"/>
    <property type="evidence" value="ECO:0007669"/>
    <property type="project" value="InterPro"/>
</dbReference>
<dbReference type="Gene3D" id="1.20.1440.90">
    <property type="entry name" value="Phosphoenolpyruvate/pyruvate domain"/>
    <property type="match status" value="1"/>
</dbReference>
<dbReference type="HAMAP" id="MF_00595">
    <property type="entry name" value="PEPcase_type1"/>
    <property type="match status" value="1"/>
</dbReference>
<dbReference type="InterPro" id="IPR021135">
    <property type="entry name" value="PEP_COase"/>
</dbReference>
<dbReference type="InterPro" id="IPR022805">
    <property type="entry name" value="PEP_COase_bac/pln-type"/>
</dbReference>
<dbReference type="InterPro" id="IPR018129">
    <property type="entry name" value="PEP_COase_Lys_AS"/>
</dbReference>
<dbReference type="InterPro" id="IPR033129">
    <property type="entry name" value="PEPCASE_His_AS"/>
</dbReference>
<dbReference type="InterPro" id="IPR015813">
    <property type="entry name" value="Pyrv/PenolPyrv_kinase-like_dom"/>
</dbReference>
<dbReference type="NCBIfam" id="NF000584">
    <property type="entry name" value="PRK00009.1"/>
    <property type="match status" value="1"/>
</dbReference>
<dbReference type="PANTHER" id="PTHR30523">
    <property type="entry name" value="PHOSPHOENOLPYRUVATE CARBOXYLASE"/>
    <property type="match status" value="1"/>
</dbReference>
<dbReference type="PANTHER" id="PTHR30523:SF6">
    <property type="entry name" value="PHOSPHOENOLPYRUVATE CARBOXYLASE"/>
    <property type="match status" value="1"/>
</dbReference>
<dbReference type="Pfam" id="PF00311">
    <property type="entry name" value="PEPcase"/>
    <property type="match status" value="1"/>
</dbReference>
<dbReference type="PRINTS" id="PR00150">
    <property type="entry name" value="PEPCARBXLASE"/>
</dbReference>
<dbReference type="SUPFAM" id="SSF51621">
    <property type="entry name" value="Phosphoenolpyruvate/pyruvate domain"/>
    <property type="match status" value="1"/>
</dbReference>
<dbReference type="PROSITE" id="PS00781">
    <property type="entry name" value="PEPCASE_1"/>
    <property type="match status" value="1"/>
</dbReference>
<dbReference type="PROSITE" id="PS00393">
    <property type="entry name" value="PEPCASE_2"/>
    <property type="match status" value="1"/>
</dbReference>
<name>CAPP_STRA3</name>
<feature type="chain" id="PRO_0000166625" description="Phosphoenolpyruvate carboxylase">
    <location>
        <begin position="1"/>
        <end position="931"/>
    </location>
</feature>
<feature type="active site" evidence="1">
    <location>
        <position position="138"/>
    </location>
</feature>
<feature type="active site" evidence="1">
    <location>
        <position position="594"/>
    </location>
</feature>
<proteinExistence type="inferred from homology"/>
<reference key="1">
    <citation type="journal article" date="2002" name="Mol. Microbiol.">
        <title>Genome sequence of Streptococcus agalactiae, a pathogen causing invasive neonatal disease.</title>
        <authorList>
            <person name="Glaser P."/>
            <person name="Rusniok C."/>
            <person name="Buchrieser C."/>
            <person name="Chevalier F."/>
            <person name="Frangeul L."/>
            <person name="Msadek T."/>
            <person name="Zouine M."/>
            <person name="Couve E."/>
            <person name="Lalioui L."/>
            <person name="Poyart C."/>
            <person name="Trieu-Cuot P."/>
            <person name="Kunst F."/>
        </authorList>
    </citation>
    <scope>NUCLEOTIDE SEQUENCE [LARGE SCALE GENOMIC DNA]</scope>
    <source>
        <strain>NEM316</strain>
    </source>
</reference>